<comment type="function">
    <text evidence="1">Catalyzes the phosphorylation of the position 2 hydroxy group of 4-diphosphocytidyl-2C-methyl-D-erythritol.</text>
</comment>
<comment type="catalytic activity">
    <reaction evidence="1">
        <text>4-CDP-2-C-methyl-D-erythritol + ATP = 4-CDP-2-C-methyl-D-erythritol 2-phosphate + ADP + H(+)</text>
        <dbReference type="Rhea" id="RHEA:18437"/>
        <dbReference type="ChEBI" id="CHEBI:15378"/>
        <dbReference type="ChEBI" id="CHEBI:30616"/>
        <dbReference type="ChEBI" id="CHEBI:57823"/>
        <dbReference type="ChEBI" id="CHEBI:57919"/>
        <dbReference type="ChEBI" id="CHEBI:456216"/>
        <dbReference type="EC" id="2.7.1.148"/>
    </reaction>
</comment>
<comment type="similarity">
    <text evidence="1">Belongs to the GHMP kinase family. IspE subfamily.</text>
</comment>
<protein>
    <recommendedName>
        <fullName evidence="1">Putative 4-diphosphocytidyl-2-C-methyl-D-erythritol kinase</fullName>
        <shortName evidence="1">CMK</shortName>
        <ecNumber evidence="1">2.7.1.148</ecNumber>
    </recommendedName>
    <alternativeName>
        <fullName evidence="1">4-(cytidine-5'-diphospho)-2-C-methyl-D-erythritol kinase</fullName>
    </alternativeName>
</protein>
<feature type="chain" id="PRO_1000007898" description="Putative 4-diphosphocytidyl-2-C-methyl-D-erythritol kinase">
    <location>
        <begin position="1"/>
        <end position="282"/>
    </location>
</feature>
<feature type="active site" evidence="1">
    <location>
        <position position="9"/>
    </location>
</feature>
<feature type="active site" evidence="1">
    <location>
        <position position="135"/>
    </location>
</feature>
<feature type="binding site" evidence="1">
    <location>
        <begin position="93"/>
        <end position="103"/>
    </location>
    <ligand>
        <name>ATP</name>
        <dbReference type="ChEBI" id="CHEBI:30616"/>
    </ligand>
</feature>
<accession>Q2G0S8</accession>
<name>ISPE_STAA8</name>
<evidence type="ECO:0000255" key="1">
    <source>
        <dbReference type="HAMAP-Rule" id="MF_00061"/>
    </source>
</evidence>
<reference key="1">
    <citation type="book" date="2006" name="Gram positive pathogens, 2nd edition">
        <title>The Staphylococcus aureus NCTC 8325 genome.</title>
        <editorList>
            <person name="Fischetti V."/>
            <person name="Novick R."/>
            <person name="Ferretti J."/>
            <person name="Portnoy D."/>
            <person name="Rood J."/>
        </editorList>
        <authorList>
            <person name="Gillaspy A.F."/>
            <person name="Worrell V."/>
            <person name="Orvis J."/>
            <person name="Roe B.A."/>
            <person name="Dyer D.W."/>
            <person name="Iandolo J.J."/>
        </authorList>
    </citation>
    <scope>NUCLEOTIDE SEQUENCE [LARGE SCALE GENOMIC DNA]</scope>
    <source>
        <strain>NCTC 8325 / PS 47</strain>
    </source>
</reference>
<keyword id="KW-0067">ATP-binding</keyword>
<keyword id="KW-0418">Kinase</keyword>
<keyword id="KW-0547">Nucleotide-binding</keyword>
<keyword id="KW-1185">Reference proteome</keyword>
<keyword id="KW-0808">Transferase</keyword>
<gene>
    <name type="ordered locus">SAOUHSC_00466</name>
</gene>
<organism>
    <name type="scientific">Staphylococcus aureus (strain NCTC 8325 / PS 47)</name>
    <dbReference type="NCBI Taxonomy" id="93061"/>
    <lineage>
        <taxon>Bacteria</taxon>
        <taxon>Bacillati</taxon>
        <taxon>Bacillota</taxon>
        <taxon>Bacilli</taxon>
        <taxon>Bacillales</taxon>
        <taxon>Staphylococcaceae</taxon>
        <taxon>Staphylococcus</taxon>
    </lineage>
</organism>
<dbReference type="EC" id="2.7.1.148" evidence="1"/>
<dbReference type="EMBL" id="CP000253">
    <property type="protein sequence ID" value="ABD29621.1"/>
    <property type="molecule type" value="Genomic_DNA"/>
</dbReference>
<dbReference type="SMR" id="Q2G0S8"/>
<dbReference type="STRING" id="93061.SAOUHSC_00466"/>
<dbReference type="PaxDb" id="1280-SAXN108_0546"/>
<dbReference type="KEGG" id="sao:SAOUHSC_00466"/>
<dbReference type="PATRIC" id="fig|93061.5.peg.421"/>
<dbReference type="eggNOG" id="COG1947">
    <property type="taxonomic scope" value="Bacteria"/>
</dbReference>
<dbReference type="HOGENOM" id="CLU_053057_1_1_9"/>
<dbReference type="OrthoDB" id="9809438at2"/>
<dbReference type="PRO" id="PR:Q2G0S8"/>
<dbReference type="Proteomes" id="UP000008816">
    <property type="component" value="Chromosome"/>
</dbReference>
<dbReference type="GO" id="GO:0050515">
    <property type="term" value="F:4-(cytidine 5'-diphospho)-2-C-methyl-D-erythritol kinase activity"/>
    <property type="evidence" value="ECO:0000318"/>
    <property type="project" value="GO_Central"/>
</dbReference>
<dbReference type="GO" id="GO:0005524">
    <property type="term" value="F:ATP binding"/>
    <property type="evidence" value="ECO:0007669"/>
    <property type="project" value="UniProtKB-UniRule"/>
</dbReference>
<dbReference type="GO" id="GO:0016114">
    <property type="term" value="P:terpenoid biosynthetic process"/>
    <property type="evidence" value="ECO:0007669"/>
    <property type="project" value="InterPro"/>
</dbReference>
<dbReference type="FunFam" id="3.30.230.10:FF:000029">
    <property type="entry name" value="4-diphosphocytidyl-2-C-methyl-D-erythritol kinase"/>
    <property type="match status" value="1"/>
</dbReference>
<dbReference type="FunFam" id="3.30.70.890:FF:000006">
    <property type="entry name" value="4-diphosphocytidyl-2-C-methyl-D-erythritol kinase"/>
    <property type="match status" value="1"/>
</dbReference>
<dbReference type="Gene3D" id="3.30.230.10">
    <property type="match status" value="1"/>
</dbReference>
<dbReference type="Gene3D" id="3.30.70.890">
    <property type="entry name" value="GHMP kinase, C-terminal domain"/>
    <property type="match status" value="1"/>
</dbReference>
<dbReference type="HAMAP" id="MF_00061">
    <property type="entry name" value="IspE"/>
    <property type="match status" value="1"/>
</dbReference>
<dbReference type="InterPro" id="IPR013750">
    <property type="entry name" value="GHMP_kinase_C_dom"/>
</dbReference>
<dbReference type="InterPro" id="IPR036554">
    <property type="entry name" value="GHMP_kinase_C_sf"/>
</dbReference>
<dbReference type="InterPro" id="IPR006204">
    <property type="entry name" value="GHMP_kinase_N_dom"/>
</dbReference>
<dbReference type="InterPro" id="IPR004424">
    <property type="entry name" value="IspE"/>
</dbReference>
<dbReference type="InterPro" id="IPR020568">
    <property type="entry name" value="Ribosomal_Su5_D2-typ_SF"/>
</dbReference>
<dbReference type="InterPro" id="IPR014721">
    <property type="entry name" value="Ribsml_uS5_D2-typ_fold_subgr"/>
</dbReference>
<dbReference type="NCBIfam" id="TIGR00154">
    <property type="entry name" value="ispE"/>
    <property type="match status" value="1"/>
</dbReference>
<dbReference type="PANTHER" id="PTHR43527">
    <property type="entry name" value="4-DIPHOSPHOCYTIDYL-2-C-METHYL-D-ERYTHRITOL KINASE, CHLOROPLASTIC"/>
    <property type="match status" value="1"/>
</dbReference>
<dbReference type="PANTHER" id="PTHR43527:SF2">
    <property type="entry name" value="4-DIPHOSPHOCYTIDYL-2-C-METHYL-D-ERYTHRITOL KINASE, CHLOROPLASTIC"/>
    <property type="match status" value="1"/>
</dbReference>
<dbReference type="Pfam" id="PF08544">
    <property type="entry name" value="GHMP_kinases_C"/>
    <property type="match status" value="1"/>
</dbReference>
<dbReference type="Pfam" id="PF00288">
    <property type="entry name" value="GHMP_kinases_N"/>
    <property type="match status" value="1"/>
</dbReference>
<dbReference type="PIRSF" id="PIRSF010376">
    <property type="entry name" value="IspE"/>
    <property type="match status" value="1"/>
</dbReference>
<dbReference type="SUPFAM" id="SSF55060">
    <property type="entry name" value="GHMP Kinase, C-terminal domain"/>
    <property type="match status" value="1"/>
</dbReference>
<dbReference type="SUPFAM" id="SSF54211">
    <property type="entry name" value="Ribosomal protein S5 domain 2-like"/>
    <property type="match status" value="1"/>
</dbReference>
<proteinExistence type="inferred from homology"/>
<sequence length="282" mass="31442">MIYETAPAKINFTLDTLFKRNDGYHEIEMIMTTVDLNDRLTFHKRKDRKIVVEIEHNYVPSNHKNLAYRAAQLFIEQYQLKQGVTISIDKEIPVSAGLAGGSADAAATLRGLNRLFDIGASLEELALLGSKIGTDIPFCIYNKTALCTGRGEKIEFLNKPPSAWVILAKPNLGISSPDIFKLINLDKRYDVHTKMCYEALENRDYQQLCQSLSNRLEPISVSKHPQIDKLKNNMLKSGADGALMSGSGPTVYGLARKESQAKNIYNAVNGCCNEVYLVRLLG</sequence>